<dbReference type="EC" id="3.4.21.-"/>
<dbReference type="EMBL" id="U11024">
    <property type="protein sequence ID" value="AAB03707.1"/>
    <property type="molecule type" value="Genomic_DNA"/>
</dbReference>
<dbReference type="PIR" id="S60762">
    <property type="entry name" value="S60762"/>
</dbReference>
<dbReference type="PDB" id="3SYJ">
    <property type="method" value="X-ray"/>
    <property type="resolution" value="2.20 A"/>
    <property type="chains" value="A=26-1036"/>
</dbReference>
<dbReference type="PDBsum" id="3SYJ"/>
<dbReference type="SMR" id="P45387"/>
<dbReference type="MINT" id="P45387"/>
<dbReference type="MEROPS" id="S06.006"/>
<dbReference type="TCDB" id="1.B.12.3.2">
    <property type="family name" value="the autotransporter-1 (at-1) family"/>
</dbReference>
<dbReference type="EvolutionaryTrace" id="P45387"/>
<dbReference type="GO" id="GO:0009279">
    <property type="term" value="C:cell outer membrane"/>
    <property type="evidence" value="ECO:0007669"/>
    <property type="project" value="UniProtKB-SubCell"/>
</dbReference>
<dbReference type="GO" id="GO:0009986">
    <property type="term" value="C:cell surface"/>
    <property type="evidence" value="ECO:0007669"/>
    <property type="project" value="UniProtKB-SubCell"/>
</dbReference>
<dbReference type="GO" id="GO:0005576">
    <property type="term" value="C:extracellular region"/>
    <property type="evidence" value="ECO:0007669"/>
    <property type="project" value="UniProtKB-SubCell"/>
</dbReference>
<dbReference type="GO" id="GO:0042597">
    <property type="term" value="C:periplasmic space"/>
    <property type="evidence" value="ECO:0007669"/>
    <property type="project" value="UniProtKB-SubCell"/>
</dbReference>
<dbReference type="GO" id="GO:0042802">
    <property type="term" value="F:identical protein binding"/>
    <property type="evidence" value="ECO:0000353"/>
    <property type="project" value="IntAct"/>
</dbReference>
<dbReference type="GO" id="GO:0004252">
    <property type="term" value="F:serine-type endopeptidase activity"/>
    <property type="evidence" value="ECO:0007669"/>
    <property type="project" value="InterPro"/>
</dbReference>
<dbReference type="GO" id="GO:0007155">
    <property type="term" value="P:cell adhesion"/>
    <property type="evidence" value="ECO:0007669"/>
    <property type="project" value="UniProtKB-KW"/>
</dbReference>
<dbReference type="GO" id="GO:0006508">
    <property type="term" value="P:proteolysis"/>
    <property type="evidence" value="ECO:0007669"/>
    <property type="project" value="UniProtKB-KW"/>
</dbReference>
<dbReference type="CDD" id="cd01343">
    <property type="entry name" value="PL1_Passenger_AT"/>
    <property type="match status" value="1"/>
</dbReference>
<dbReference type="Gene3D" id="2.160.20.20">
    <property type="match status" value="1"/>
</dbReference>
<dbReference type="Gene3D" id="2.40.10.120">
    <property type="match status" value="1"/>
</dbReference>
<dbReference type="InterPro" id="IPR005546">
    <property type="entry name" value="Autotransporte_beta"/>
</dbReference>
<dbReference type="InterPro" id="IPR036709">
    <property type="entry name" value="Autotransporte_beta_dom_sf"/>
</dbReference>
<dbReference type="InterPro" id="IPR012332">
    <property type="entry name" value="Autotransporter_pectin_lyase_C"/>
</dbReference>
<dbReference type="InterPro" id="IPR050909">
    <property type="entry name" value="Bact_Autotransporter_VF"/>
</dbReference>
<dbReference type="InterPro" id="IPR006315">
    <property type="entry name" value="OM_autotransptr_brl_dom"/>
</dbReference>
<dbReference type="InterPro" id="IPR011050">
    <property type="entry name" value="Pectin_lyase_fold/virulence"/>
</dbReference>
<dbReference type="InterPro" id="IPR000710">
    <property type="entry name" value="Peptidase_S6"/>
</dbReference>
<dbReference type="InterPro" id="IPR030396">
    <property type="entry name" value="Peptidase_S6_dom"/>
</dbReference>
<dbReference type="InterPro" id="IPR004899">
    <property type="entry name" value="Pertactin_central"/>
</dbReference>
<dbReference type="NCBIfam" id="TIGR01414">
    <property type="entry name" value="autotrans_barl"/>
    <property type="match status" value="1"/>
</dbReference>
<dbReference type="PANTHER" id="PTHR12338:SF10">
    <property type="entry name" value="ADHESION AND PENETRATION PROTEIN AUTOTRANSPORTER"/>
    <property type="match status" value="1"/>
</dbReference>
<dbReference type="PANTHER" id="PTHR12338">
    <property type="entry name" value="AUTOTRANSPORTER"/>
    <property type="match status" value="1"/>
</dbReference>
<dbReference type="Pfam" id="PF24078">
    <property type="entry name" value="Beta-sol_PIC_HAP1_IgA0_2nd"/>
    <property type="match status" value="1"/>
</dbReference>
<dbReference type="Pfam" id="PF02395">
    <property type="entry name" value="Peptidase_S6"/>
    <property type="match status" value="1"/>
</dbReference>
<dbReference type="Pfam" id="PF03212">
    <property type="entry name" value="Pertactin"/>
    <property type="match status" value="1"/>
</dbReference>
<dbReference type="PRINTS" id="PR00921">
    <property type="entry name" value="IGASERPTASE"/>
</dbReference>
<dbReference type="SMART" id="SM00869">
    <property type="entry name" value="Autotransporter"/>
    <property type="match status" value="1"/>
</dbReference>
<dbReference type="SUPFAM" id="SSF103515">
    <property type="entry name" value="Autotransporter"/>
    <property type="match status" value="1"/>
</dbReference>
<dbReference type="SUPFAM" id="SSF51126">
    <property type="entry name" value="Pectin lyase-like"/>
    <property type="match status" value="1"/>
</dbReference>
<dbReference type="PROSITE" id="PS51208">
    <property type="entry name" value="AUTOTRANSPORTER"/>
    <property type="match status" value="1"/>
</dbReference>
<dbReference type="PROSITE" id="PS51691">
    <property type="entry name" value="PEPTIDASE_S6"/>
    <property type="match status" value="1"/>
</dbReference>
<gene>
    <name type="primary">hap</name>
</gene>
<comment type="function">
    <text>Probable protease; promotes adherence and invasion by directly binding to a host cell structure.</text>
</comment>
<comment type="interaction">
    <interactant intactId="EBI-7074441">
        <id>P45387</id>
    </interactant>
    <interactant intactId="EBI-7074441">
        <id>P45387</id>
        <label>hap</label>
    </interactant>
    <organismsDiffer>false</organismsDiffer>
    <experiments>2</experiments>
</comment>
<comment type="subcellular location">
    <molecule>Adhesion and penetration protein autotransporter</molecule>
    <subcellularLocation>
        <location evidence="1">Periplasm</location>
    </subcellularLocation>
</comment>
<comment type="subcellular location">
    <molecule>Adhesion and penetration protein</molecule>
    <subcellularLocation>
        <location>Secreted</location>
    </subcellularLocation>
    <subcellularLocation>
        <location>Cell surface</location>
    </subcellularLocation>
</comment>
<comment type="subcellular location">
    <molecule>Adhesion and penetration protein translocator</molecule>
    <subcellularLocation>
        <location evidence="1">Cell outer membrane</location>
        <topology evidence="1">Multi-pass membrane protein</topology>
    </subcellularLocation>
    <text evidence="1">The cleaved C-terminal fragment (autotransporter domain) is localized in the outer membrane.</text>
</comment>
<comment type="domain">
    <text evidence="1">The signal peptide, cleaved at the inner membrane, guides the autotransporter protein to the periplasmic space. Then, insertion of the C-terminal translocator domain in the outer membrane forms a hydrophilic pore for the translocation of the passenger domain to the bacterial cell surface, with subsequent cleavage (By similarity).</text>
</comment>
<name>HAP2_HAEIF</name>
<reference key="1">
    <citation type="journal article" date="1994" name="Mol. Microbiol.">
        <title>A Haemophilus influenzae IgA protease-like protein promotes intimate interaction with human epithelial cells.</title>
        <authorList>
            <person name="St Geme J.W. III"/>
            <person name="de la Morena M.L."/>
            <person name="Falkow S."/>
        </authorList>
    </citation>
    <scope>NUCLEOTIDE SEQUENCE [GENOMIC DNA]</scope>
    <source>
        <strain>NTHi N187</strain>
    </source>
</reference>
<protein>
    <recommendedName>
        <fullName>Adhesion and penetration protein autotransporter</fullName>
        <ecNumber>3.4.21.-</ecNumber>
    </recommendedName>
    <component>
        <recommendedName>
            <fullName>Adhesion and penetration protein</fullName>
        </recommendedName>
    </component>
    <component>
        <recommendedName>
            <fullName>Adhesion and penetration protein translocator</fullName>
        </recommendedName>
    </component>
</protein>
<evidence type="ECO:0000250" key="1"/>
<evidence type="ECO:0000255" key="2"/>
<evidence type="ECO:0000255" key="3">
    <source>
        <dbReference type="PROSITE-ProRule" id="PRU00556"/>
    </source>
</evidence>
<evidence type="ECO:0000255" key="4">
    <source>
        <dbReference type="PROSITE-ProRule" id="PRU01028"/>
    </source>
</evidence>
<evidence type="ECO:0000256" key="5">
    <source>
        <dbReference type="SAM" id="MobiDB-lite"/>
    </source>
</evidence>
<evidence type="ECO:0000305" key="6"/>
<evidence type="ECO:0007829" key="7">
    <source>
        <dbReference type="PDB" id="3SYJ"/>
    </source>
</evidence>
<feature type="signal peptide" evidence="2">
    <location>
        <begin position="1"/>
        <end position="25"/>
    </location>
</feature>
<feature type="chain" id="PRO_0000387596" description="Adhesion and penetration protein autotransporter">
    <location>
        <begin position="26"/>
        <end position="1394"/>
    </location>
</feature>
<feature type="chain" id="PRO_0000026956" description="Adhesion and penetration protein">
    <location>
        <begin position="26"/>
        <end status="unknown"/>
    </location>
</feature>
<feature type="chain" id="PRO_0000026957" description="Adhesion and penetration protein translocator" evidence="2">
    <location>
        <begin status="unknown"/>
        <end position="1394"/>
    </location>
</feature>
<feature type="domain" description="Peptidase S6" evidence="4">
    <location>
        <begin position="26"/>
        <end position="286"/>
    </location>
</feature>
<feature type="domain" description="Autotransporter" evidence="3">
    <location>
        <begin position="1140"/>
        <end position="1394"/>
    </location>
</feature>
<feature type="region of interest" description="Disordered" evidence="5">
    <location>
        <begin position="848"/>
        <end position="870"/>
    </location>
</feature>
<feature type="region of interest" description="Disordered" evidence="5">
    <location>
        <begin position="995"/>
        <end position="1027"/>
    </location>
</feature>
<feature type="active site" evidence="1">
    <location>
        <position position="243"/>
    </location>
</feature>
<feature type="sequence conflict" description="In Ref. 1; AAB03707." evidence="6" ref="1">
    <location>
        <position position="1167"/>
    </location>
</feature>
<feature type="strand" evidence="7">
    <location>
        <begin position="27"/>
        <end position="29"/>
    </location>
</feature>
<feature type="helix" evidence="7">
    <location>
        <begin position="34"/>
        <end position="42"/>
    </location>
</feature>
<feature type="strand" evidence="7">
    <location>
        <begin position="54"/>
        <end position="57"/>
    </location>
</feature>
<feature type="strand" evidence="7">
    <location>
        <begin position="63"/>
        <end position="71"/>
    </location>
</feature>
<feature type="helix" evidence="7">
    <location>
        <begin position="76"/>
        <end position="78"/>
    </location>
</feature>
<feature type="strand" evidence="7">
    <location>
        <begin position="86"/>
        <end position="89"/>
    </location>
</feature>
<feature type="strand" evidence="7">
    <location>
        <begin position="92"/>
        <end position="95"/>
    </location>
</feature>
<feature type="helix" evidence="7">
    <location>
        <begin position="114"/>
        <end position="116"/>
    </location>
</feature>
<feature type="strand" evidence="7">
    <location>
        <begin position="121"/>
        <end position="125"/>
    </location>
</feature>
<feature type="strand" evidence="7">
    <location>
        <begin position="145"/>
        <end position="148"/>
    </location>
</feature>
<feature type="helix" evidence="7">
    <location>
        <begin position="164"/>
        <end position="168"/>
    </location>
</feature>
<feature type="turn" evidence="7">
    <location>
        <begin position="170"/>
        <end position="172"/>
    </location>
</feature>
<feature type="strand" evidence="7">
    <location>
        <begin position="176"/>
        <end position="180"/>
    </location>
</feature>
<feature type="strand" evidence="7">
    <location>
        <begin position="184"/>
        <end position="187"/>
    </location>
</feature>
<feature type="strand" evidence="7">
    <location>
        <begin position="193"/>
        <end position="197"/>
    </location>
</feature>
<feature type="strand" evidence="7">
    <location>
        <begin position="204"/>
        <end position="207"/>
    </location>
</feature>
<feature type="strand" evidence="7">
    <location>
        <begin position="211"/>
        <end position="216"/>
    </location>
</feature>
<feature type="strand" evidence="7">
    <location>
        <begin position="218"/>
        <end position="221"/>
    </location>
</feature>
<feature type="strand" evidence="7">
    <location>
        <begin position="246"/>
        <end position="251"/>
    </location>
</feature>
<feature type="turn" evidence="7">
    <location>
        <begin position="252"/>
        <end position="255"/>
    </location>
</feature>
<feature type="strand" evidence="7">
    <location>
        <begin position="256"/>
        <end position="263"/>
    </location>
</feature>
<feature type="strand" evidence="7">
    <location>
        <begin position="274"/>
        <end position="278"/>
    </location>
</feature>
<feature type="helix" evidence="7">
    <location>
        <begin position="281"/>
        <end position="291"/>
    </location>
</feature>
<feature type="strand" evidence="7">
    <location>
        <begin position="294"/>
        <end position="297"/>
    </location>
</feature>
<feature type="strand" evidence="7">
    <location>
        <begin position="304"/>
        <end position="310"/>
    </location>
</feature>
<feature type="strand" evidence="7">
    <location>
        <begin position="312"/>
        <end position="333"/>
    </location>
</feature>
<feature type="strand" evidence="7">
    <location>
        <begin position="338"/>
        <end position="341"/>
    </location>
</feature>
<feature type="helix" evidence="7">
    <location>
        <begin position="347"/>
        <end position="349"/>
    </location>
</feature>
<feature type="helix" evidence="7">
    <location>
        <begin position="357"/>
        <end position="360"/>
    </location>
</feature>
<feature type="strand" evidence="7">
    <location>
        <begin position="365"/>
        <end position="368"/>
    </location>
</feature>
<feature type="strand" evidence="7">
    <location>
        <begin position="373"/>
        <end position="379"/>
    </location>
</feature>
<feature type="strand" evidence="7">
    <location>
        <begin position="388"/>
        <end position="392"/>
    </location>
</feature>
<feature type="strand" evidence="7">
    <location>
        <begin position="394"/>
        <end position="401"/>
    </location>
</feature>
<feature type="strand" evidence="7">
    <location>
        <begin position="403"/>
        <end position="407"/>
    </location>
</feature>
<feature type="strand" evidence="7">
    <location>
        <begin position="409"/>
        <end position="411"/>
    </location>
</feature>
<feature type="strand" evidence="7">
    <location>
        <begin position="416"/>
        <end position="419"/>
    </location>
</feature>
<feature type="strand" evidence="7">
    <location>
        <begin position="428"/>
        <end position="439"/>
    </location>
</feature>
<feature type="strand" evidence="7">
    <location>
        <begin position="442"/>
        <end position="444"/>
    </location>
</feature>
<feature type="strand" evidence="7">
    <location>
        <begin position="448"/>
        <end position="458"/>
    </location>
</feature>
<feature type="strand" evidence="7">
    <location>
        <begin position="474"/>
        <end position="489"/>
    </location>
</feature>
<feature type="helix" evidence="7">
    <location>
        <begin position="493"/>
        <end position="495"/>
    </location>
</feature>
<feature type="strand" evidence="7">
    <location>
        <begin position="496"/>
        <end position="498"/>
    </location>
</feature>
<feature type="strand" evidence="7">
    <location>
        <begin position="503"/>
        <end position="506"/>
    </location>
</feature>
<feature type="strand" evidence="7">
    <location>
        <begin position="512"/>
        <end position="516"/>
    </location>
</feature>
<feature type="strand" evidence="7">
    <location>
        <begin position="524"/>
        <end position="527"/>
    </location>
</feature>
<feature type="strand" evidence="7">
    <location>
        <begin position="531"/>
        <end position="533"/>
    </location>
</feature>
<feature type="strand" evidence="7">
    <location>
        <begin position="535"/>
        <end position="539"/>
    </location>
</feature>
<feature type="helix" evidence="7">
    <location>
        <begin position="555"/>
        <end position="558"/>
    </location>
</feature>
<feature type="strand" evidence="7">
    <location>
        <begin position="560"/>
        <end position="564"/>
    </location>
</feature>
<feature type="strand" evidence="7">
    <location>
        <begin position="566"/>
        <end position="569"/>
    </location>
</feature>
<feature type="strand" evidence="7">
    <location>
        <begin position="580"/>
        <end position="584"/>
    </location>
</feature>
<feature type="strand" evidence="7">
    <location>
        <begin position="587"/>
        <end position="590"/>
    </location>
</feature>
<feature type="strand" evidence="7">
    <location>
        <begin position="592"/>
        <end position="595"/>
    </location>
</feature>
<feature type="strand" evidence="7">
    <location>
        <begin position="597"/>
        <end position="600"/>
    </location>
</feature>
<feature type="strand" evidence="7">
    <location>
        <begin position="602"/>
        <end position="607"/>
    </location>
</feature>
<feature type="strand" evidence="7">
    <location>
        <begin position="609"/>
        <end position="614"/>
    </location>
</feature>
<feature type="helix" evidence="7">
    <location>
        <begin position="628"/>
        <end position="634"/>
    </location>
</feature>
<feature type="strand" evidence="7">
    <location>
        <begin position="650"/>
        <end position="659"/>
    </location>
</feature>
<feature type="strand" evidence="7">
    <location>
        <begin position="661"/>
        <end position="666"/>
    </location>
</feature>
<feature type="strand" evidence="7">
    <location>
        <begin position="668"/>
        <end position="679"/>
    </location>
</feature>
<feature type="strand" evidence="7">
    <location>
        <begin position="684"/>
        <end position="687"/>
    </location>
</feature>
<feature type="strand" evidence="7">
    <location>
        <begin position="693"/>
        <end position="700"/>
    </location>
</feature>
<feature type="turn" evidence="7">
    <location>
        <begin position="702"/>
        <end position="704"/>
    </location>
</feature>
<feature type="strand" evidence="7">
    <location>
        <begin position="707"/>
        <end position="713"/>
    </location>
</feature>
<feature type="helix" evidence="7">
    <location>
        <begin position="717"/>
        <end position="722"/>
    </location>
</feature>
<feature type="strand" evidence="7">
    <location>
        <begin position="726"/>
        <end position="730"/>
    </location>
</feature>
<feature type="strand" evidence="7">
    <location>
        <begin position="732"/>
        <end position="734"/>
    </location>
</feature>
<feature type="strand" evidence="7">
    <location>
        <begin position="739"/>
        <end position="748"/>
    </location>
</feature>
<feature type="strand" evidence="7">
    <location>
        <begin position="752"/>
        <end position="754"/>
    </location>
</feature>
<feature type="strand" evidence="7">
    <location>
        <begin position="759"/>
        <end position="763"/>
    </location>
</feature>
<feature type="strand" evidence="7">
    <location>
        <begin position="767"/>
        <end position="770"/>
    </location>
</feature>
<feature type="strand" evidence="7">
    <location>
        <begin position="772"/>
        <end position="774"/>
    </location>
</feature>
<feature type="strand" evidence="7">
    <location>
        <begin position="779"/>
        <end position="789"/>
    </location>
</feature>
<feature type="strand" evidence="7">
    <location>
        <begin position="791"/>
        <end position="793"/>
    </location>
</feature>
<feature type="strand" evidence="7">
    <location>
        <begin position="798"/>
        <end position="803"/>
    </location>
</feature>
<feature type="strand" evidence="7">
    <location>
        <begin position="810"/>
        <end position="812"/>
    </location>
</feature>
<feature type="strand" evidence="7">
    <location>
        <begin position="817"/>
        <end position="822"/>
    </location>
</feature>
<feature type="strand" evidence="7">
    <location>
        <begin position="824"/>
        <end position="826"/>
    </location>
</feature>
<feature type="strand" evidence="7">
    <location>
        <begin position="831"/>
        <end position="845"/>
    </location>
</feature>
<feature type="helix" evidence="7">
    <location>
        <begin position="847"/>
        <end position="849"/>
    </location>
</feature>
<feature type="strand" evidence="7">
    <location>
        <begin position="877"/>
        <end position="880"/>
    </location>
</feature>
<feature type="strand" evidence="7">
    <location>
        <begin position="884"/>
        <end position="895"/>
    </location>
</feature>
<feature type="turn" evidence="7">
    <location>
        <begin position="896"/>
        <end position="899"/>
    </location>
</feature>
<feature type="strand" evidence="7">
    <location>
        <begin position="903"/>
        <end position="906"/>
    </location>
</feature>
<feature type="strand" evidence="7">
    <location>
        <begin position="912"/>
        <end position="920"/>
    </location>
</feature>
<feature type="strand" evidence="7">
    <location>
        <begin position="931"/>
        <end position="940"/>
    </location>
</feature>
<feature type="strand" evidence="7">
    <location>
        <begin position="946"/>
        <end position="950"/>
    </location>
</feature>
<feature type="strand" evidence="7">
    <location>
        <begin position="955"/>
        <end position="957"/>
    </location>
</feature>
<feature type="strand" evidence="7">
    <location>
        <begin position="960"/>
        <end position="967"/>
    </location>
</feature>
<feature type="strand" evidence="7">
    <location>
        <begin position="970"/>
        <end position="974"/>
    </location>
</feature>
<sequence length="1394" mass="155441">MKKTVFRLNFLTACISLGIVSQAWAGHTYFGIDYQYYRDFAENKGKFTVGAQNIKVYNKQGQLVGTSMTKAPMIDFSVVSRNGVAALVENQYIVSVAHNVGYTDVDFGAEGNNPDQHRFTYKIVKRNNYKKDNLHPYEDDYHNPRLHKFVTEAAPIDMTSNMNGSTYSDRTKYPERVRIGSGRQFWRNDQDKGDQVAGAYHYLTAGNTHNQRGAGNGYSYLGGDVRKAGEYGPLPIAGSKGDSGSPMFIYDAEKQKWLINGILREGNPFEGKENGFQLVRKSYFDEIFERDLHTSLYTRAGNGVYTISGNDNGQGSITQKSGIPSEIKITLANMSLPLKEKDKVHNPRYDGPNIYSPRLNNGETLYFMDQKQGSLIFASDINQGAGGLYFEGNFTVSPNSNQTWQGAGIHVSENSTVTWKVNGVEHDRLSKIGKGTLHVQAKGENKGSISVGDGKVILEQQADDQGNKQAFSEIGLVSGRGTVQLNDDKQFDTDKFYFGFRGGRLDLNGHSLTFKRIQNTDEGAMIVNHNTTQAANVTITGNESIVLPNGNNINKLDYRKEIAYNGWFGETDKNKHNGRLNLIYKPTTEDRTLLLSGGTNLKGDITQTKGKLFFSGRPTPHAYNHLNKRWSEMEGIPQGEIVWDHDWINRTFKAENFQIKGGSAVVSRNVSSIEGNWTVSNNANATFGVVPNQQNTICTRSDWTGLTTCQKVDLTDTKVINSIPKTQINGSINLTDNATANVKGLAKLNGNVTLTNHSQFTLSNNATQIGNIRLSDNSTATVDNANLNGNVHLTDSAQFSLKNSHFSHQIQGDKGTTVTLENATWTMPSDTTLQNLTLNNSTITLNSAYSASSNNTPRRRSLETETTPTSAEHRFNTLTVNGKLSGQGTFQFTSSLFGYKSDKLKLSNDAEGDYILSVRNTGKEPETLEQLTLVESKDNQPLSDKLKFTLENDHVDAGALRYKLVKNDGEFRLHNPIKEQELHNDLVRAEQAERTLEAKQVEPTAKTQTGEPKVRSRRAARAAFPDTLPDQSLLNALEAKQAELTAETQKSKAKTKKVRSKRAVFSDPLLDQSLFALEAALEVIDAPQQSEKDRLAQEEAEKQRKQKDLISRYSNSALSELSATVNSMLSVQDELDRLFVDQAQSAVWTNIAQDKRRYDSDAFRAYQQQKTNLRQIGVQKALANGRIGAVFSHSRSDNTFDEQVKNHATLTMMSGFAQYQWGDLQFGVNVGTGISASKMAEEQSRKIHRKAINYGVNASYQFRLGQLGIQPYFGVNRYFIERENYQSEEVRVKTPSLAFNRYNAGIRVDYTFTPTDNISVKPYFFVNYVDVSNANVQTTVNLTVLQQPFGRYWQKEVGLKAEILHFQISAFISKSQGSQLGKQQNVGVKLGYRW</sequence>
<keyword id="KW-0002">3D-structure</keyword>
<keyword id="KW-0130">Cell adhesion</keyword>
<keyword id="KW-0998">Cell outer membrane</keyword>
<keyword id="KW-0378">Hydrolase</keyword>
<keyword id="KW-0472">Membrane</keyword>
<keyword id="KW-0574">Periplasm</keyword>
<keyword id="KW-0645">Protease</keyword>
<keyword id="KW-0964">Secreted</keyword>
<keyword id="KW-0720">Serine protease</keyword>
<keyword id="KW-0732">Signal</keyword>
<keyword id="KW-0812">Transmembrane</keyword>
<keyword id="KW-1134">Transmembrane beta strand</keyword>
<keyword id="KW-0865">Zymogen</keyword>
<proteinExistence type="evidence at protein level"/>
<accession>P45387</accession>
<organism>
    <name type="scientific">Haemophilus influenzae</name>
    <dbReference type="NCBI Taxonomy" id="727"/>
    <lineage>
        <taxon>Bacteria</taxon>
        <taxon>Pseudomonadati</taxon>
        <taxon>Pseudomonadota</taxon>
        <taxon>Gammaproteobacteria</taxon>
        <taxon>Pasteurellales</taxon>
        <taxon>Pasteurellaceae</taxon>
        <taxon>Haemophilus</taxon>
    </lineage>
</organism>